<dbReference type="EC" id="4.6.1.17" evidence="1"/>
<dbReference type="EMBL" id="CP000768">
    <property type="protein sequence ID" value="ABS43664.1"/>
    <property type="molecule type" value="Genomic_DNA"/>
</dbReference>
<dbReference type="SMR" id="A7H1U7"/>
<dbReference type="KEGG" id="cjd:JJD26997_0251"/>
<dbReference type="HOGENOM" id="CLU_074693_1_1_7"/>
<dbReference type="UniPathway" id="UPA00344"/>
<dbReference type="Proteomes" id="UP000002302">
    <property type="component" value="Chromosome"/>
</dbReference>
<dbReference type="GO" id="GO:0061799">
    <property type="term" value="F:cyclic pyranopterin monophosphate synthase activity"/>
    <property type="evidence" value="ECO:0007669"/>
    <property type="project" value="UniProtKB-UniRule"/>
</dbReference>
<dbReference type="GO" id="GO:0006777">
    <property type="term" value="P:Mo-molybdopterin cofactor biosynthetic process"/>
    <property type="evidence" value="ECO:0007669"/>
    <property type="project" value="UniProtKB-UniRule"/>
</dbReference>
<dbReference type="CDD" id="cd01420">
    <property type="entry name" value="MoaC_PE"/>
    <property type="match status" value="1"/>
</dbReference>
<dbReference type="Gene3D" id="3.30.70.640">
    <property type="entry name" value="Molybdopterin cofactor biosynthesis C (MoaC) domain"/>
    <property type="match status" value="1"/>
</dbReference>
<dbReference type="HAMAP" id="MF_01224_B">
    <property type="entry name" value="MoaC_B"/>
    <property type="match status" value="1"/>
</dbReference>
<dbReference type="InterPro" id="IPR023045">
    <property type="entry name" value="MoaC"/>
</dbReference>
<dbReference type="InterPro" id="IPR047594">
    <property type="entry name" value="MoaC_bact/euk"/>
</dbReference>
<dbReference type="InterPro" id="IPR036522">
    <property type="entry name" value="MoaC_sf"/>
</dbReference>
<dbReference type="InterPro" id="IPR050105">
    <property type="entry name" value="MoCo_biosynth_MoaA/MoaC"/>
</dbReference>
<dbReference type="InterPro" id="IPR002820">
    <property type="entry name" value="Mopterin_CF_biosynth-C_dom"/>
</dbReference>
<dbReference type="NCBIfam" id="TIGR00581">
    <property type="entry name" value="moaC"/>
    <property type="match status" value="1"/>
</dbReference>
<dbReference type="NCBIfam" id="NF006870">
    <property type="entry name" value="PRK09364.1"/>
    <property type="match status" value="1"/>
</dbReference>
<dbReference type="PANTHER" id="PTHR22960">
    <property type="entry name" value="MOLYBDOPTERIN COFACTOR SYNTHESIS PROTEIN A"/>
    <property type="match status" value="1"/>
</dbReference>
<dbReference type="Pfam" id="PF01967">
    <property type="entry name" value="MoaC"/>
    <property type="match status" value="1"/>
</dbReference>
<dbReference type="SUPFAM" id="SSF55040">
    <property type="entry name" value="Molybdenum cofactor biosynthesis protein C, MoaC"/>
    <property type="match status" value="1"/>
</dbReference>
<comment type="function">
    <text evidence="1">Catalyzes the conversion of (8S)-3',8-cyclo-7,8-dihydroguanosine 5'-triphosphate to cyclic pyranopterin monophosphate (cPMP).</text>
</comment>
<comment type="catalytic activity">
    <reaction evidence="1">
        <text>(8S)-3',8-cyclo-7,8-dihydroguanosine 5'-triphosphate = cyclic pyranopterin phosphate + diphosphate</text>
        <dbReference type="Rhea" id="RHEA:49580"/>
        <dbReference type="ChEBI" id="CHEBI:33019"/>
        <dbReference type="ChEBI" id="CHEBI:59648"/>
        <dbReference type="ChEBI" id="CHEBI:131766"/>
        <dbReference type="EC" id="4.6.1.17"/>
    </reaction>
</comment>
<comment type="pathway">
    <text evidence="1">Cofactor biosynthesis; molybdopterin biosynthesis.</text>
</comment>
<comment type="subunit">
    <text evidence="1">Homohexamer; trimer of dimers.</text>
</comment>
<comment type="similarity">
    <text evidence="1">Belongs to the MoaC family.</text>
</comment>
<accession>A7H1U7</accession>
<protein>
    <recommendedName>
        <fullName evidence="1">Cyclic pyranopterin monophosphate synthase</fullName>
        <ecNumber evidence="1">4.6.1.17</ecNumber>
    </recommendedName>
    <alternativeName>
        <fullName evidence="1">Molybdenum cofactor biosynthesis protein C</fullName>
    </alternativeName>
</protein>
<sequence>MKLSHLDEKNHPKMVDVSDKNITSRMATASGVIYMSQEAFDVIKNNTAKKGPVLQTAIVAAIMGAKKTSEIIPMCHPLMLSKIETDIVEFVKECAFKLIVTVKCEGKTGVEMEALSGVSIGLLTIYDMIKAIDKSMRITDIVLESKEGGKSGKFVRY</sequence>
<evidence type="ECO:0000255" key="1">
    <source>
        <dbReference type="HAMAP-Rule" id="MF_01224"/>
    </source>
</evidence>
<name>MOAC_CAMJD</name>
<gene>
    <name evidence="1" type="primary">moaC</name>
    <name type="ordered locus">JJD26997_0251</name>
</gene>
<feature type="chain" id="PRO_1000054081" description="Cyclic pyranopterin monophosphate synthase">
    <location>
        <begin position="1"/>
        <end position="157"/>
    </location>
</feature>
<feature type="active site" evidence="1">
    <location>
        <position position="127"/>
    </location>
</feature>
<feature type="binding site" evidence="1">
    <location>
        <begin position="74"/>
        <end position="76"/>
    </location>
    <ligand>
        <name>substrate</name>
    </ligand>
</feature>
<feature type="binding site" evidence="1">
    <location>
        <begin position="112"/>
        <end position="113"/>
    </location>
    <ligand>
        <name>substrate</name>
    </ligand>
</feature>
<organism>
    <name type="scientific">Campylobacter jejuni subsp. doylei (strain ATCC BAA-1458 / RM4099 / 269.97)</name>
    <dbReference type="NCBI Taxonomy" id="360109"/>
    <lineage>
        <taxon>Bacteria</taxon>
        <taxon>Pseudomonadati</taxon>
        <taxon>Campylobacterota</taxon>
        <taxon>Epsilonproteobacteria</taxon>
        <taxon>Campylobacterales</taxon>
        <taxon>Campylobacteraceae</taxon>
        <taxon>Campylobacter</taxon>
    </lineage>
</organism>
<keyword id="KW-0456">Lyase</keyword>
<keyword id="KW-0501">Molybdenum cofactor biosynthesis</keyword>
<reference key="1">
    <citation type="submission" date="2007-07" db="EMBL/GenBank/DDBJ databases">
        <title>Complete genome sequence of Campylobacter jejuni subsp doylei 269.97 isolated from human blood.</title>
        <authorList>
            <person name="Fouts D.E."/>
            <person name="Mongodin E.F."/>
            <person name="Puiu D."/>
            <person name="Sebastian Y."/>
            <person name="Miller W.G."/>
            <person name="Mandrell R.E."/>
            <person name="Lastovica A.J."/>
            <person name="Nelson K.E."/>
        </authorList>
    </citation>
    <scope>NUCLEOTIDE SEQUENCE [LARGE SCALE GENOMIC DNA]</scope>
    <source>
        <strain>ATCC BAA-1458 / RM4099 / 269.97</strain>
    </source>
</reference>
<proteinExistence type="inferred from homology"/>